<evidence type="ECO:0000255" key="1">
    <source>
        <dbReference type="HAMAP-Rule" id="MF_00454"/>
    </source>
</evidence>
<sequence length="121" mass="13272">MKSLLLIFLGGGTGSVLRYLLTISIYRQGTTNFPWGTFAVNILGCILIGVFYTLTSRIHINNDIRLMLTIGLCGGFTTFSTFSNESLQLLKSGLYPSFFTYIIGSVVLGILGVMLGIWMSE</sequence>
<organism>
    <name type="scientific">Phocaeicola vulgatus (strain ATCC 8482 / DSM 1447 / JCM 5826 / CCUG 4940 / NBRC 14291 / NCTC 11154)</name>
    <name type="common">Bacteroides vulgatus</name>
    <dbReference type="NCBI Taxonomy" id="435590"/>
    <lineage>
        <taxon>Bacteria</taxon>
        <taxon>Pseudomonadati</taxon>
        <taxon>Bacteroidota</taxon>
        <taxon>Bacteroidia</taxon>
        <taxon>Bacteroidales</taxon>
        <taxon>Bacteroidaceae</taxon>
        <taxon>Phocaeicola</taxon>
    </lineage>
</organism>
<protein>
    <recommendedName>
        <fullName evidence="1">Fluoride-specific ion channel FluC</fullName>
    </recommendedName>
</protein>
<reference key="1">
    <citation type="journal article" date="2007" name="PLoS Biol.">
        <title>Evolution of symbiotic bacteria in the distal human intestine.</title>
        <authorList>
            <person name="Xu J."/>
            <person name="Mahowald M.A."/>
            <person name="Ley R.E."/>
            <person name="Lozupone C.A."/>
            <person name="Hamady M."/>
            <person name="Martens E.C."/>
            <person name="Henrissat B."/>
            <person name="Coutinho P.M."/>
            <person name="Minx P."/>
            <person name="Latreille P."/>
            <person name="Cordum H."/>
            <person name="Van Brunt A."/>
            <person name="Kim K."/>
            <person name="Fulton R.S."/>
            <person name="Fulton L.A."/>
            <person name="Clifton S.W."/>
            <person name="Wilson R.K."/>
            <person name="Knight R.D."/>
            <person name="Gordon J.I."/>
        </authorList>
    </citation>
    <scope>NUCLEOTIDE SEQUENCE [LARGE SCALE GENOMIC DNA]</scope>
    <source>
        <strain>ATCC 8482 / DSM 1447 / JCM 5826 / CCUG 4940 / NBRC 14291 / NCTC 11154</strain>
    </source>
</reference>
<feature type="chain" id="PRO_1000026369" description="Fluoride-specific ion channel FluC">
    <location>
        <begin position="1"/>
        <end position="121"/>
    </location>
</feature>
<feature type="transmembrane region" description="Helical" evidence="1">
    <location>
        <begin position="5"/>
        <end position="25"/>
    </location>
</feature>
<feature type="transmembrane region" description="Helical" evidence="1">
    <location>
        <begin position="33"/>
        <end position="53"/>
    </location>
</feature>
<feature type="transmembrane region" description="Helical" evidence="1">
    <location>
        <begin position="66"/>
        <end position="83"/>
    </location>
</feature>
<feature type="transmembrane region" description="Helical" evidence="1">
    <location>
        <begin position="98"/>
        <end position="118"/>
    </location>
</feature>
<feature type="binding site" evidence="1">
    <location>
        <position position="74"/>
    </location>
    <ligand>
        <name>Na(+)</name>
        <dbReference type="ChEBI" id="CHEBI:29101"/>
        <note>structural</note>
    </ligand>
</feature>
<feature type="binding site" evidence="1">
    <location>
        <position position="77"/>
    </location>
    <ligand>
        <name>Na(+)</name>
        <dbReference type="ChEBI" id="CHEBI:29101"/>
        <note>structural</note>
    </ligand>
</feature>
<keyword id="KW-0997">Cell inner membrane</keyword>
<keyword id="KW-1003">Cell membrane</keyword>
<keyword id="KW-0407">Ion channel</keyword>
<keyword id="KW-0406">Ion transport</keyword>
<keyword id="KW-0472">Membrane</keyword>
<keyword id="KW-0479">Metal-binding</keyword>
<keyword id="KW-0915">Sodium</keyword>
<keyword id="KW-0812">Transmembrane</keyword>
<keyword id="KW-1133">Transmembrane helix</keyword>
<keyword id="KW-0813">Transport</keyword>
<dbReference type="EMBL" id="CP000139">
    <property type="protein sequence ID" value="ABR41442.1"/>
    <property type="molecule type" value="Genomic_DNA"/>
</dbReference>
<dbReference type="RefSeq" id="WP_005841677.1">
    <property type="nucleotide sequence ID" value="NZ_JANSWM010000033.1"/>
</dbReference>
<dbReference type="SMR" id="A6L6X8"/>
<dbReference type="STRING" id="435590.BVU_3831"/>
<dbReference type="PaxDb" id="435590-BVU_3831"/>
<dbReference type="GeneID" id="5304790"/>
<dbReference type="KEGG" id="bvu:BVU_3831"/>
<dbReference type="eggNOG" id="COG0239">
    <property type="taxonomic scope" value="Bacteria"/>
</dbReference>
<dbReference type="HOGENOM" id="CLU_114342_2_3_10"/>
<dbReference type="BioCyc" id="BVUL435590:G1G59-3967-MONOMER"/>
<dbReference type="Proteomes" id="UP000002861">
    <property type="component" value="Chromosome"/>
</dbReference>
<dbReference type="GO" id="GO:0005886">
    <property type="term" value="C:plasma membrane"/>
    <property type="evidence" value="ECO:0007669"/>
    <property type="project" value="UniProtKB-SubCell"/>
</dbReference>
<dbReference type="GO" id="GO:0062054">
    <property type="term" value="F:fluoride channel activity"/>
    <property type="evidence" value="ECO:0007669"/>
    <property type="project" value="UniProtKB-UniRule"/>
</dbReference>
<dbReference type="GO" id="GO:0046872">
    <property type="term" value="F:metal ion binding"/>
    <property type="evidence" value="ECO:0007669"/>
    <property type="project" value="UniProtKB-KW"/>
</dbReference>
<dbReference type="GO" id="GO:0140114">
    <property type="term" value="P:cellular detoxification of fluoride"/>
    <property type="evidence" value="ECO:0007669"/>
    <property type="project" value="UniProtKB-UniRule"/>
</dbReference>
<dbReference type="HAMAP" id="MF_00454">
    <property type="entry name" value="FluC"/>
    <property type="match status" value="1"/>
</dbReference>
<dbReference type="InterPro" id="IPR003691">
    <property type="entry name" value="FluC"/>
</dbReference>
<dbReference type="NCBIfam" id="TIGR00494">
    <property type="entry name" value="crcB"/>
    <property type="match status" value="1"/>
</dbReference>
<dbReference type="PANTHER" id="PTHR28259">
    <property type="entry name" value="FLUORIDE EXPORT PROTEIN 1-RELATED"/>
    <property type="match status" value="1"/>
</dbReference>
<dbReference type="PANTHER" id="PTHR28259:SF1">
    <property type="entry name" value="FLUORIDE EXPORT PROTEIN 1-RELATED"/>
    <property type="match status" value="1"/>
</dbReference>
<dbReference type="Pfam" id="PF02537">
    <property type="entry name" value="CRCB"/>
    <property type="match status" value="1"/>
</dbReference>
<accession>A6L6X8</accession>
<gene>
    <name evidence="1" type="primary">fluC</name>
    <name evidence="1" type="synonym">crcB</name>
    <name type="ordered locus">BVU_3831</name>
</gene>
<comment type="function">
    <text evidence="1">Fluoride-specific ion channel. Important for reducing fluoride concentration in the cell, thus reducing its toxicity.</text>
</comment>
<comment type="catalytic activity">
    <reaction evidence="1">
        <text>fluoride(in) = fluoride(out)</text>
        <dbReference type="Rhea" id="RHEA:76159"/>
        <dbReference type="ChEBI" id="CHEBI:17051"/>
    </reaction>
    <physiologicalReaction direction="left-to-right" evidence="1">
        <dbReference type="Rhea" id="RHEA:76160"/>
    </physiologicalReaction>
</comment>
<comment type="activity regulation">
    <text evidence="1">Na(+) is not transported, but it plays an essential structural role and its presence is essential for fluoride channel function.</text>
</comment>
<comment type="subcellular location">
    <subcellularLocation>
        <location evidence="1">Cell inner membrane</location>
        <topology evidence="1">Multi-pass membrane protein</topology>
    </subcellularLocation>
</comment>
<comment type="similarity">
    <text evidence="1">Belongs to the fluoride channel Fluc/FEX (TC 1.A.43) family.</text>
</comment>
<name>FLUC_PHOV8</name>
<proteinExistence type="inferred from homology"/>